<accession>A8GW64</accession>
<organism>
    <name type="scientific">Rickettsia bellii (strain OSU 85-389)</name>
    <dbReference type="NCBI Taxonomy" id="391896"/>
    <lineage>
        <taxon>Bacteria</taxon>
        <taxon>Pseudomonadati</taxon>
        <taxon>Pseudomonadota</taxon>
        <taxon>Alphaproteobacteria</taxon>
        <taxon>Rickettsiales</taxon>
        <taxon>Rickettsiaceae</taxon>
        <taxon>Rickettsieae</taxon>
        <taxon>Rickettsia</taxon>
        <taxon>belli group</taxon>
    </lineage>
</organism>
<keyword id="KW-0240">DNA-directed RNA polymerase</keyword>
<keyword id="KW-0548">Nucleotidyltransferase</keyword>
<keyword id="KW-0804">Transcription</keyword>
<keyword id="KW-0808">Transferase</keyword>
<dbReference type="EC" id="2.7.7.6" evidence="1"/>
<dbReference type="EMBL" id="CP000849">
    <property type="protein sequence ID" value="ABV79091.1"/>
    <property type="molecule type" value="Genomic_DNA"/>
</dbReference>
<dbReference type="RefSeq" id="WP_011477654.1">
    <property type="nucleotide sequence ID" value="NC_009883.1"/>
</dbReference>
<dbReference type="SMR" id="A8GW64"/>
<dbReference type="KEGG" id="rbo:A1I_03690"/>
<dbReference type="HOGENOM" id="CLU_138545_0_0_5"/>
<dbReference type="GO" id="GO:0000428">
    <property type="term" value="C:DNA-directed RNA polymerase complex"/>
    <property type="evidence" value="ECO:0007669"/>
    <property type="project" value="UniProtKB-KW"/>
</dbReference>
<dbReference type="GO" id="GO:0003677">
    <property type="term" value="F:DNA binding"/>
    <property type="evidence" value="ECO:0007669"/>
    <property type="project" value="UniProtKB-UniRule"/>
</dbReference>
<dbReference type="GO" id="GO:0003899">
    <property type="term" value="F:DNA-directed RNA polymerase activity"/>
    <property type="evidence" value="ECO:0007669"/>
    <property type="project" value="UniProtKB-UniRule"/>
</dbReference>
<dbReference type="GO" id="GO:0006351">
    <property type="term" value="P:DNA-templated transcription"/>
    <property type="evidence" value="ECO:0007669"/>
    <property type="project" value="UniProtKB-UniRule"/>
</dbReference>
<dbReference type="Gene3D" id="3.90.940.10">
    <property type="match status" value="1"/>
</dbReference>
<dbReference type="HAMAP" id="MF_00366">
    <property type="entry name" value="RNApol_bact_RpoZ"/>
    <property type="match status" value="1"/>
</dbReference>
<dbReference type="InterPro" id="IPR003716">
    <property type="entry name" value="DNA-dir_RNA_pol_omega"/>
</dbReference>
<dbReference type="InterPro" id="IPR006110">
    <property type="entry name" value="Pol_omega/Rpo6/RPB6"/>
</dbReference>
<dbReference type="InterPro" id="IPR036161">
    <property type="entry name" value="RPB6/omega-like_sf"/>
</dbReference>
<dbReference type="NCBIfam" id="TIGR00690">
    <property type="entry name" value="rpoZ"/>
    <property type="match status" value="1"/>
</dbReference>
<dbReference type="PANTHER" id="PTHR34476">
    <property type="entry name" value="DNA-DIRECTED RNA POLYMERASE SUBUNIT OMEGA"/>
    <property type="match status" value="1"/>
</dbReference>
<dbReference type="PANTHER" id="PTHR34476:SF1">
    <property type="entry name" value="DNA-DIRECTED RNA POLYMERASE SUBUNIT OMEGA"/>
    <property type="match status" value="1"/>
</dbReference>
<dbReference type="Pfam" id="PF01192">
    <property type="entry name" value="RNA_pol_Rpb6"/>
    <property type="match status" value="1"/>
</dbReference>
<dbReference type="SMART" id="SM01409">
    <property type="entry name" value="RNA_pol_Rpb6"/>
    <property type="match status" value="1"/>
</dbReference>
<dbReference type="SUPFAM" id="SSF63562">
    <property type="entry name" value="RPB6/omega subunit-like"/>
    <property type="match status" value="1"/>
</dbReference>
<protein>
    <recommendedName>
        <fullName evidence="1">DNA-directed RNA polymerase subunit omega</fullName>
        <shortName evidence="1">RNAP omega subunit</shortName>
        <ecNumber evidence="1">2.7.7.6</ecNumber>
    </recommendedName>
    <alternativeName>
        <fullName evidence="1">RNA polymerase omega subunit</fullName>
    </alternativeName>
    <alternativeName>
        <fullName evidence="1">Transcriptase subunit omega</fullName>
    </alternativeName>
</protein>
<name>RPOZ_RICB8</name>
<proteinExistence type="inferred from homology"/>
<evidence type="ECO:0000255" key="1">
    <source>
        <dbReference type="HAMAP-Rule" id="MF_00366"/>
    </source>
</evidence>
<feature type="chain" id="PRO_1000005998" description="DNA-directed RNA polymerase subunit omega">
    <location>
        <begin position="1"/>
        <end position="126"/>
    </location>
</feature>
<comment type="function">
    <text evidence="1">Promotes RNA polymerase assembly. Latches the N- and C-terminal regions of the beta' subunit thereby facilitating its interaction with the beta and alpha subunits.</text>
</comment>
<comment type="catalytic activity">
    <reaction evidence="1">
        <text>RNA(n) + a ribonucleoside 5'-triphosphate = RNA(n+1) + diphosphate</text>
        <dbReference type="Rhea" id="RHEA:21248"/>
        <dbReference type="Rhea" id="RHEA-COMP:14527"/>
        <dbReference type="Rhea" id="RHEA-COMP:17342"/>
        <dbReference type="ChEBI" id="CHEBI:33019"/>
        <dbReference type="ChEBI" id="CHEBI:61557"/>
        <dbReference type="ChEBI" id="CHEBI:140395"/>
        <dbReference type="EC" id="2.7.7.6"/>
    </reaction>
</comment>
<comment type="subunit">
    <text evidence="1">The RNAP catalytic core consists of 2 alpha, 1 beta, 1 beta' and 1 omega subunit. When a sigma factor is associated with the core the holoenzyme is formed, which can initiate transcription.</text>
</comment>
<comment type="similarity">
    <text evidence="1">Belongs to the RNA polymerase subunit omega family.</text>
</comment>
<gene>
    <name evidence="1" type="primary">rpoZ</name>
    <name type="ordered locus">A1I_03690</name>
</gene>
<reference key="1">
    <citation type="submission" date="2007-09" db="EMBL/GenBank/DDBJ databases">
        <title>Complete genome sequencing of Rickettsia bellii.</title>
        <authorList>
            <person name="Madan A."/>
            <person name="Lee H."/>
            <person name="Madan A."/>
            <person name="Yoon J.-G."/>
            <person name="Ryu G.-Y."/>
            <person name="Dasch G."/>
            <person name="Ereemeva M."/>
        </authorList>
    </citation>
    <scope>NUCLEOTIDE SEQUENCE [LARGE SCALE GENOMIC DNA]</scope>
    <source>
        <strain>OSU 85-389</strain>
    </source>
</reference>
<sequence length="126" mass="14772">MARITTEDCSKVIPDRFQLVIYATRYAKLLNYKVETNQSKKEKRDKPPVIALRRIASGKVSVAQLEQDFINSLRTRSRIEPIVEQDESEDLEEKFEYLPEVYIGEDYSDLDDQIFTEETGEDFEDK</sequence>